<reference key="1">
    <citation type="journal article" date="1992" name="DNA Seq.">
        <title>Infectivity determinants encoded in a conserved gene block of human herpesvirus-6.</title>
        <authorList>
            <person name="Gompels U.A."/>
            <person name="Carss A.L."/>
            <person name="Sun N."/>
            <person name="Arrand J.R."/>
        </authorList>
    </citation>
    <scope>NUCLEOTIDE SEQUENCE [GENOMIC DNA]</scope>
</reference>
<reference key="2">
    <citation type="journal article" date="1995" name="Virology">
        <title>The DNA sequence of human herpesvirus-6: structure, coding content, and genome evolution.</title>
        <authorList>
            <person name="Gompels U.A."/>
            <person name="Nicholas J."/>
            <person name="Lawrence G.L."/>
            <person name="Jones M."/>
            <person name="Thomson B.J."/>
            <person name="Martin M.E.D."/>
            <person name="Efstathiou S."/>
            <person name="Craxton M.A."/>
            <person name="Macaulay H.A."/>
        </authorList>
    </citation>
    <scope>NUCLEOTIDE SEQUENCE [LARGE SCALE GENOMIC DNA]</scope>
</reference>
<organism>
    <name type="scientific">Human herpesvirus 6A (strain Uganda-1102)</name>
    <name type="common">HHV-6 variant A</name>
    <name type="synonym">Human B lymphotropic virus</name>
    <dbReference type="NCBI Taxonomy" id="10370"/>
    <lineage>
        <taxon>Viruses</taxon>
        <taxon>Duplodnaviria</taxon>
        <taxon>Heunggongvirae</taxon>
        <taxon>Peploviricota</taxon>
        <taxon>Herviviricetes</taxon>
        <taxon>Herpesvirales</taxon>
        <taxon>Orthoherpesviridae</taxon>
        <taxon>Betaherpesvirinae</taxon>
        <taxon>Roseolovirus</taxon>
        <taxon>Roseolovirus humanbeta6a</taxon>
        <taxon>Human betaherpesvirus 6A</taxon>
    </lineage>
</organism>
<feature type="signal peptide" evidence="2">
    <location>
        <begin position="1"/>
        <end position="56"/>
    </location>
</feature>
<feature type="chain" id="PRO_0000038316" description="120 kDa Glycoprotein O">
    <location>
        <begin position="57"/>
        <end position="651"/>
    </location>
</feature>
<feature type="chain" id="PRO_0000445358" description="80 kDa Glycoprotein O">
    <location>
        <begin position="57"/>
        <end status="unknown"/>
    </location>
</feature>
<feature type="region of interest" description="Disordered" evidence="3">
    <location>
        <begin position="275"/>
        <end position="303"/>
    </location>
</feature>
<feature type="compositionally biased region" description="Low complexity" evidence="3">
    <location>
        <begin position="275"/>
        <end position="292"/>
    </location>
</feature>
<feature type="glycosylation site" description="N-linked (GlcNAc...) asparagine; by host" evidence="2">
    <location>
        <position position="74"/>
    </location>
</feature>
<feature type="glycosylation site" description="N-linked (GlcNAc...) asparagine; by host" evidence="2">
    <location>
        <position position="97"/>
    </location>
</feature>
<feature type="glycosylation site" description="N-linked (GlcNAc...) asparagine; by host" evidence="2">
    <location>
        <position position="147"/>
    </location>
</feature>
<feature type="glycosylation site" description="N-linked (GlcNAc...) asparagine; by host" evidence="2">
    <location>
        <position position="208"/>
    </location>
</feature>
<feature type="glycosylation site" description="N-linked (GlcNAc...) asparagine; by host" evidence="2">
    <location>
        <position position="223"/>
    </location>
</feature>
<feature type="glycosylation site" description="N-linked (GlcNAc...) asparagine; by host" evidence="2">
    <location>
        <position position="234"/>
    </location>
</feature>
<feature type="glycosylation site" description="N-linked (GlcNAc...) asparagine; by host" evidence="2">
    <location>
        <position position="254"/>
    </location>
</feature>
<feature type="glycosylation site" description="N-linked (GlcNAc...) asparagine; by host" evidence="2">
    <location>
        <position position="302"/>
    </location>
</feature>
<feature type="glycosylation site" description="N-linked (GlcNAc...) asparagine; by host" evidence="2">
    <location>
        <position position="355"/>
    </location>
</feature>
<feature type="glycosylation site" description="N-linked (GlcNAc...) asparagine; by host" evidence="2">
    <location>
        <position position="378"/>
    </location>
</feature>
<feature type="glycosylation site" description="N-linked (GlcNAc...) asparagine; by host" evidence="2">
    <location>
        <position position="395"/>
    </location>
</feature>
<feature type="glycosylation site" description="N-linked (GlcNAc...) asparagine; by host" evidence="2">
    <location>
        <position position="469"/>
    </location>
</feature>
<feature type="glycosylation site" description="N-linked (GlcNAc...) asparagine; by host" evidence="2">
    <location>
        <position position="502"/>
    </location>
</feature>
<feature type="glycosylation site" description="N-linked (GlcNAc...) asparagine; by host" evidence="2">
    <location>
        <position position="520"/>
    </location>
</feature>
<feature type="glycosylation site" description="N-linked (GlcNAc...) asparagine; by host" evidence="2">
    <location>
        <position position="546"/>
    </location>
</feature>
<feature type="glycosylation site" description="N-linked (GlcNAc...) asparagine; by host" evidence="2">
    <location>
        <position position="603"/>
    </location>
</feature>
<feature type="glycosylation site" description="N-linked (GlcNAc...) asparagine; by host" evidence="2">
    <location>
        <position position="620"/>
    </location>
</feature>
<feature type="glycosylation site" description="N-linked (GlcNAc...) asparagine; by host" evidence="2">
    <location>
        <position position="631"/>
    </location>
</feature>
<accession>Q06093</accession>
<evidence type="ECO:0000250" key="1">
    <source>
        <dbReference type="UniProtKB" id="P30005"/>
    </source>
</evidence>
<evidence type="ECO:0000255" key="2"/>
<evidence type="ECO:0000256" key="3">
    <source>
        <dbReference type="SAM" id="MobiDB-lite"/>
    </source>
</evidence>
<evidence type="ECO:0000305" key="4"/>
<gene>
    <name type="primary">U47</name>
    <name type="synonym">BHLF2</name>
</gene>
<comment type="subunit">
    <molecule>80 kDa Glycoprotein O</molecule>
    <text evidence="1">Part of a gH-gL-gO complex.</text>
</comment>
<comment type="subcellular location">
    <molecule>80 kDa Glycoprotein O</molecule>
    <subcellularLocation>
        <location evidence="1">Virion</location>
    </subcellularLocation>
    <subcellularLocation>
        <location evidence="1">Host cell membrane</location>
    </subcellularLocation>
    <text evidence="1">Expressed on the host cell surface as a part of the gH-gL-gO complex.</text>
</comment>
<comment type="PTM">
    <molecule>120 kDa Glycoprotein O</molecule>
    <text evidence="1">A shorter mature protein, gO-80K, is produced probably by proteolytic cleavage.</text>
</comment>
<comment type="PTM">
    <molecule>120 kDa Glycoprotein O</molecule>
    <text evidence="1">Modified with high mannose-oligosaccharides.</text>
</comment>
<comment type="PTM">
    <molecule>80 kDa Glycoprotein O</molecule>
    <text evidence="1">N-glycosylated with complex glycans.</text>
</comment>
<comment type="similarity">
    <text evidence="4">Belongs to the herpesviridae U47 family.</text>
</comment>
<comment type="caution">
    <text evidence="4">It is uncertain whether Met-1 or Met-34 is the initiator.</text>
</comment>
<organismHost>
    <name type="scientific">Homo sapiens</name>
    <name type="common">Human</name>
    <dbReference type="NCBI Taxonomy" id="9606"/>
</organismHost>
<protein>
    <recommendedName>
        <fullName>120 kDa Glycoprotein O</fullName>
        <shortName>gO-120K</shortName>
    </recommendedName>
    <alternativeName>
        <fullName>Glycoprotein U47</fullName>
    </alternativeName>
    <component>
        <recommendedName>
            <fullName>80 kDa Glycoprotein O</fullName>
            <shortName>gO-80K</shortName>
        </recommendedName>
    </component>
</protein>
<keyword id="KW-0325">Glycoprotein</keyword>
<keyword id="KW-1032">Host cell membrane</keyword>
<keyword id="KW-1043">Host membrane</keyword>
<keyword id="KW-0472">Membrane</keyword>
<keyword id="KW-1185">Reference proteome</keyword>
<keyword id="KW-0732">Signal</keyword>
<keyword id="KW-0946">Virion</keyword>
<proteinExistence type="inferred from homology"/>
<sequence length="651" mass="73250">MHLEVIVQSYKKSKYYFSHTFYLYKFIVVNSPDMLHISRLGLFLGLFAIVMHSVNLIKYTSDPLEAFKTVNRHNWSDEQREHFYDLRNLYTSFCQTNLSLDCFTQILTNVFSWDIRDSQCKSAVSLSPLQNLPRTEIKIVLSSTTANKSIIASSFSLFYLLFATLSTYTADPPCVELLPFKILGAQLFDIKLTEESLRMAMSKFSNSNLTRSLTSFTSKNFFNYTSFVYFLLYNTTSCVPSNDQYFKQSPKPINVTTSFGRAIVNFDSILTTTPSSTSASLTSPHIPSTNIPTPAPPPVTKNSTKLHTDTIKVTPNTPTITTQTTESIKKIVKRSDFPRPMYTPTDIPTLTIRLNATIKTEQNTENPKSPPKPTNFENTTIRIPKTLESATATTNATQKIESTTFTTIGIKEINGNTYSSPKNSIYLKSKSQQSTTKFTDAEHTTPILKFTTWQNTVRTYMSHNTEVQNMTDKFQRTTLKSSNELPTIQTLSVTPKQKLPSNVTAKTEVHITNNALPSSNSSYSITEVTKEVKHTRMSASTHEQINHTEIAQITPILNAHTSEKSTTPQRSFTAETFLTTSSKPNIITWSNLLTTTPKEPLTNTSLRWTDHITTQLTTSNRTQSAKLTKANISSQTTNIYPQTITGRSTEV</sequence>
<name>GO_HHV6U</name>
<dbReference type="EMBL" id="X64320">
    <property type="protein sequence ID" value="CAA45602.1"/>
    <property type="molecule type" value="Genomic_DNA"/>
</dbReference>
<dbReference type="EMBL" id="X83413">
    <property type="protein sequence ID" value="CAA58381.1"/>
    <property type="molecule type" value="Genomic_DNA"/>
</dbReference>
<dbReference type="PIR" id="C56653">
    <property type="entry name" value="C56653"/>
</dbReference>
<dbReference type="RefSeq" id="NP_042940.2">
    <property type="nucleotide sequence ID" value="NC_001664.2"/>
</dbReference>
<dbReference type="IntAct" id="Q06093">
    <property type="interactions" value="1"/>
</dbReference>
<dbReference type="MINT" id="Q06093"/>
<dbReference type="GlyCosmos" id="Q06093">
    <property type="glycosylation" value="18 sites, No reported glycans"/>
</dbReference>
<dbReference type="DNASU" id="1487926"/>
<dbReference type="GeneID" id="1487926"/>
<dbReference type="KEGG" id="vg:1487926"/>
<dbReference type="Proteomes" id="UP000009295">
    <property type="component" value="Segment"/>
</dbReference>
<dbReference type="GO" id="GO:0020002">
    <property type="term" value="C:host cell plasma membrane"/>
    <property type="evidence" value="ECO:0007669"/>
    <property type="project" value="UniProtKB-SubCell"/>
</dbReference>
<dbReference type="GO" id="GO:0016020">
    <property type="term" value="C:membrane"/>
    <property type="evidence" value="ECO:0007669"/>
    <property type="project" value="UniProtKB-KW"/>
</dbReference>
<dbReference type="GO" id="GO:0044423">
    <property type="term" value="C:virion component"/>
    <property type="evidence" value="ECO:0007669"/>
    <property type="project" value="UniProtKB-KW"/>
</dbReference>
<dbReference type="InterPro" id="IPR008645">
    <property type="entry name" value="Roseolovirus_U47"/>
</dbReference>
<dbReference type="Pfam" id="PF05467">
    <property type="entry name" value="Herpes_U47"/>
    <property type="match status" value="2"/>
</dbReference>